<sequence length="402" mass="44104">MAQDRKKVLVLGAGYAGLQTVTKLQKAISTEEAEITLINKNEYHYEATWLHEASAGTLNYEDVLYPVESVLKKDKVNFVQAEVTKIDRDAKKVETNQGIYDFDILVVALGFVSETFGIEGMKDHAFQIENVITARELSRHIEDKFANYAASKEKDDNDLSILVGGAGFTGVEFLGELTDRIPELCSKYGVDQNKVKITCVEAAPKMLPMFSEELVNHAVSYLEDRGVEFKIATPIVACNEKGFVVEVDGEKQQLNAGTSVWAAGVRGSKLMEESFEGVKRGRIVTKQDLTINGYDNIFVIGDCSAFIPAGEERPLPTTAQIAMQQGESVAKNIKRILNGESTEEFEYVDRGTVCSLGSHDGVGMVFGKPIAGKKAAFMKKVIDTRAVFKIGGIGLAFKKGKF</sequence>
<name>NDH_STAA8</name>
<comment type="function">
    <text evidence="2 4">Alternative, nonproton pumping NADH:quinone oxidoreductase that delivers electrons to the respiratory chain by oxidation of NADH and reduction of quinones, and contributes to the regeneration of NAD(+) (PubMed:26172206, PubMed:28801048). Can use DMN, a menaquinone analog, 2,3-dimethoxy-5,6-dimethyl-benzoquinone (DDB), an ubiquinone analog, or 2,3,5,6-tetramethyl-1,4-benzoquinone (Duroquinone, DQ) a plastoquinone analog as electron acceptors (PubMed:26172206).</text>
</comment>
<comment type="catalytic activity">
    <reaction evidence="2 4 5">
        <text>a quinone + NADH + H(+) = a quinol + NAD(+)</text>
        <dbReference type="Rhea" id="RHEA:46160"/>
        <dbReference type="ChEBI" id="CHEBI:15378"/>
        <dbReference type="ChEBI" id="CHEBI:24646"/>
        <dbReference type="ChEBI" id="CHEBI:57540"/>
        <dbReference type="ChEBI" id="CHEBI:57945"/>
        <dbReference type="ChEBI" id="CHEBI:132124"/>
        <dbReference type="EC" id="1.6.5.9"/>
    </reaction>
</comment>
<comment type="catalytic activity">
    <reaction evidence="2">
        <text>a menaquinone + NADH + H(+) = a menaquinol + NAD(+)</text>
        <dbReference type="Rhea" id="RHEA:29235"/>
        <dbReference type="Rhea" id="RHEA-COMP:9537"/>
        <dbReference type="Rhea" id="RHEA-COMP:9539"/>
        <dbReference type="ChEBI" id="CHEBI:15378"/>
        <dbReference type="ChEBI" id="CHEBI:16374"/>
        <dbReference type="ChEBI" id="CHEBI:18151"/>
        <dbReference type="ChEBI" id="CHEBI:57540"/>
        <dbReference type="ChEBI" id="CHEBI:57945"/>
    </reaction>
</comment>
<comment type="catalytic activity">
    <reaction evidence="2">
        <text>a ubiquinone + NADH + H(+) = a ubiquinol + NAD(+)</text>
        <dbReference type="Rhea" id="RHEA:23152"/>
        <dbReference type="Rhea" id="RHEA-COMP:9565"/>
        <dbReference type="Rhea" id="RHEA-COMP:9566"/>
        <dbReference type="ChEBI" id="CHEBI:15378"/>
        <dbReference type="ChEBI" id="CHEBI:16389"/>
        <dbReference type="ChEBI" id="CHEBI:17976"/>
        <dbReference type="ChEBI" id="CHEBI:57540"/>
        <dbReference type="ChEBI" id="CHEBI:57945"/>
    </reaction>
</comment>
<comment type="cofactor">
    <cofactor evidence="1 2 4">
        <name>FAD</name>
        <dbReference type="ChEBI" id="CHEBI:57692"/>
    </cofactor>
    <text evidence="2 4">Binds 1 FAD per subunit.</text>
</comment>
<comment type="activity regulation">
    <text evidence="2 5">Inhibited by HQNO, a quinone derivative.</text>
</comment>
<comment type="biophysicochemical properties">
    <kinetics>
        <KM evidence="2">69.9 uM for DMN</KM>
        <KM evidence="2">63.7 uM for DDB</KM>
        <KM evidence="2">55.4 uM for DQ</KM>
        <KM evidence="2">20.5 uM for NADH</KM>
        <Vmax evidence="2">132.7 umol/min/mg enzyme with DMN as substrate</Vmax>
        <Vmax evidence="2">129.3 umol/min/mg enzyme with DDB as substrate</Vmax>
        <Vmax evidence="2">119.1 umol/min/mg enzyme with DQ as substrate</Vmax>
        <Vmax evidence="2">175.9 umol/min/mg enzyme with NADH as substrate</Vmax>
        <text evidence="2">kcat is 67.9 sec(-1) with DMN as substrate. kcat is 69.4 sec(-1) with DDB as substrate. kcat is 68.2 sec(-1) with DQ as substrate.</text>
    </kinetics>
</comment>
<comment type="subunit">
    <text evidence="1 2">Homodimer in solution (PubMed:25849513, PubMed:26172206). Forms homotetramers; dimer of dimers (PubMed:25849513, PubMed:26172206).</text>
</comment>
<comment type="subcellular location">
    <subcellularLocation>
        <location evidence="1 2">Cell membrane</location>
    </subcellularLocation>
    <text evidence="2">Interacts with the membrane via an anti-parallel three-stranded beta-sheet followed by two helices arranged in a helix-turn-helix motif at the C-terminal region.</text>
</comment>
<comment type="domain">
    <text evidence="2 3 4">Contains a first dinucleotide binding domain, which harbors FAD, a second dinucleotide binding domain, which interacts with NADH and C-terminal domain that provides anchoring to the membrane (PubMed:28801048). A long discussion has taken place about whether NADH and the quinone bind to the same or to different sites. Structural studies clearly indicate the presence of distinct binding sites for the two substrates (PubMed:26172206, PubMed:28181562).</text>
</comment>
<comment type="similarity">
    <text evidence="8">Belongs to the NADH dehydrogenase family.</text>
</comment>
<evidence type="ECO:0000269" key="1">
    <source>
    </source>
</evidence>
<evidence type="ECO:0000269" key="2">
    <source>
    </source>
</evidence>
<evidence type="ECO:0000269" key="3">
    <source>
    </source>
</evidence>
<evidence type="ECO:0000269" key="4">
    <source>
    </source>
</evidence>
<evidence type="ECO:0000269" key="5">
    <source>
    </source>
</evidence>
<evidence type="ECO:0000303" key="6">
    <source>
    </source>
</evidence>
<evidence type="ECO:0000303" key="7">
    <source>
    </source>
</evidence>
<evidence type="ECO:0000305" key="8"/>
<evidence type="ECO:0000305" key="9">
    <source>
    </source>
</evidence>
<evidence type="ECO:0000305" key="10">
    <source>
    </source>
</evidence>
<evidence type="ECO:0007744" key="11">
    <source>
        <dbReference type="PDB" id="5NA1"/>
    </source>
</evidence>
<evidence type="ECO:0007744" key="12">
    <source>
        <dbReference type="PDB" id="5NA4"/>
    </source>
</evidence>
<evidence type="ECO:0007829" key="13">
    <source>
        <dbReference type="PDB" id="5NA1"/>
    </source>
</evidence>
<evidence type="ECO:0007829" key="14">
    <source>
        <dbReference type="PDB" id="5NA4"/>
    </source>
</evidence>
<proteinExistence type="evidence at protein level"/>
<accession>Q2FZV7</accession>
<gene>
    <name type="ordered locus">SAOUHSC_00878</name>
</gene>
<reference key="1">
    <citation type="book" date="2006" name="Gram positive pathogens, 2nd edition">
        <title>The Staphylococcus aureus NCTC 8325 genome.</title>
        <editorList>
            <person name="Fischetti V."/>
            <person name="Novick R."/>
            <person name="Ferretti J."/>
            <person name="Portnoy D."/>
            <person name="Rood J."/>
        </editorList>
        <authorList>
            <person name="Gillaspy A.F."/>
            <person name="Worrell V."/>
            <person name="Orvis J."/>
            <person name="Roe B.A."/>
            <person name="Dyer D.W."/>
            <person name="Iandolo J.J."/>
        </authorList>
    </citation>
    <scope>NUCLEOTIDE SEQUENCE [LARGE SCALE GENOMIC DNA]</scope>
    <source>
        <strain>NCTC 8325 / PS 47</strain>
    </source>
</reference>
<reference key="2">
    <citation type="journal article" date="2015" name="Acta Crystallogr. F Struct. Biol. Commun.">
        <title>Expression, purification, crystallization and preliminary X-ray diffraction analysis of a type II NADH:quinone oxidoreductase from the human pathogen Staphylococcus aureus.</title>
        <authorList>
            <person name="Rosario A.L."/>
            <person name="Sena F.V."/>
            <person name="Batista A.P."/>
            <person name="Oliveira T.F."/>
            <person name="Athayde D."/>
            <person name="Pereira M.M."/>
            <person name="Brito J.A."/>
            <person name="Archer M."/>
        </authorList>
    </citation>
    <scope>COFACTOR</scope>
    <scope>SUBUNIT</scope>
    <scope>SUBCELLULAR LOCATION</scope>
    <scope>CRYSTALLIZATION</scope>
    <source>
        <strain>NCTC 8325 / PS 47</strain>
    </source>
</reference>
<reference key="3">
    <citation type="journal article" date="2015" name="Mol. Microbiol.">
        <title>Type-II NADH:quinone oxidoreductase from Staphylococcus aureus has two distinct binding sites and is rate limited by quinone reduction.</title>
        <authorList>
            <person name="Sena F.V."/>
            <person name="Batista A.P."/>
            <person name="Catarino T."/>
            <person name="Brito J.A."/>
            <person name="Archer M."/>
            <person name="Viertler M."/>
            <person name="Madl T."/>
            <person name="Cabrita E.J."/>
            <person name="Pereira M.M."/>
        </authorList>
    </citation>
    <scope>FUNCTION</scope>
    <scope>CATALYTIC ACTIVITY</scope>
    <scope>COFACTOR</scope>
    <scope>ACTIVITY REGULATION</scope>
    <scope>BIOPHYSICOCHEMICAL PROPERTIES</scope>
    <scope>SUBUNIT</scope>
    <scope>SUBCELLULAR LOCATION</scope>
    <scope>DOMAIN</scope>
    <source>
        <strain>NCTC 8325 / PS 47</strain>
    </source>
</reference>
<reference key="4">
    <citation type="journal article" date="2017" name="Sci. Rep.">
        <title>Structural and functional insights into the catalytic mechanism of the type II NADH:quinone oxidoreductase family.</title>
        <authorList>
            <person name="Marreiros B.C."/>
            <person name="Sena F.V."/>
            <person name="Sousa F.M."/>
            <person name="Oliveira A.S."/>
            <person name="Soares C.M."/>
            <person name="Batista A.P."/>
            <person name="Pereira M.M."/>
        </authorList>
    </citation>
    <scope>REACTION MECHANISM</scope>
    <scope>ACTIVE SITE</scope>
    <scope>DOMAIN</scope>
</reference>
<reference key="5">
    <citation type="journal article" date="2018" name="Redox Biol.">
        <title>Regulation of the mechanism of Type-II NADH: Quinone oxidoreductase from S. aureus.</title>
        <authorList>
            <person name="Sena F.V."/>
            <person name="Sousa F.M."/>
            <person name="Oliveira A.S.F."/>
            <person name="Soares C.M."/>
            <person name="Catarino T."/>
            <person name="Pereira M.M."/>
        </authorList>
    </citation>
    <scope>CATALYTIC ACTIVITY</scope>
    <scope>ACTIVITY REGULATION</scope>
    <source>
        <strain>NCTC 8325 / PS 47</strain>
    </source>
</reference>
<reference evidence="11 12" key="6">
    <citation type="journal article" date="2017" name="Biochim. Biophys. Acta">
        <title>The key role of glutamate 172 in the mechanism of type II NADH:quinone oxidoreductase of Staphylococcus aureus.</title>
        <authorList>
            <person name="Sousa F.M."/>
            <person name="Sena F.V."/>
            <person name="Batista A.P."/>
            <person name="Athayde D."/>
            <person name="Brito J.A."/>
            <person name="Archer M."/>
            <person name="Oliveira A.S.F."/>
            <person name="Soares C.M."/>
            <person name="Catarino T."/>
            <person name="Pereira M.M."/>
        </authorList>
    </citation>
    <scope>X-RAY CRYSTALLOGRAPHY (2.32 ANGSTROMS) OF WILD-TYPE AND MUTANT SER-172 IN COMPLEXES WITH FAD</scope>
    <scope>FUNCTION</scope>
    <scope>CATALYTIC ACTIVITY</scope>
    <scope>COFACTOR</scope>
    <scope>ACTIVE SITE</scope>
    <scope>MUTAGENESIS OF GLU-172</scope>
    <source>
        <strain>NCTC 8325 / PS 47</strain>
    </source>
</reference>
<keyword id="KW-0002">3D-structure</keyword>
<keyword id="KW-1003">Cell membrane</keyword>
<keyword id="KW-0274">FAD</keyword>
<keyword id="KW-0285">Flavoprotein</keyword>
<keyword id="KW-0472">Membrane</keyword>
<keyword id="KW-0520">NAD</keyword>
<keyword id="KW-0560">Oxidoreductase</keyword>
<keyword id="KW-1185">Reference proteome</keyword>
<organism>
    <name type="scientific">Staphylococcus aureus (strain NCTC 8325 / PS 47)</name>
    <dbReference type="NCBI Taxonomy" id="93061"/>
    <lineage>
        <taxon>Bacteria</taxon>
        <taxon>Bacillati</taxon>
        <taxon>Bacillota</taxon>
        <taxon>Bacilli</taxon>
        <taxon>Bacillales</taxon>
        <taxon>Staphylococcaceae</taxon>
        <taxon>Staphylococcus</taxon>
    </lineage>
</organism>
<dbReference type="EC" id="1.6.5.9" evidence="2 4 5"/>
<dbReference type="EMBL" id="CP000253">
    <property type="protein sequence ID" value="ABD30003.1"/>
    <property type="molecule type" value="Genomic_DNA"/>
</dbReference>
<dbReference type="RefSeq" id="WP_000046076.1">
    <property type="nucleotide sequence ID" value="NZ_LS483365.1"/>
</dbReference>
<dbReference type="RefSeq" id="YP_499431.1">
    <property type="nucleotide sequence ID" value="NC_007795.1"/>
</dbReference>
<dbReference type="PDB" id="5NA1">
    <property type="method" value="X-ray"/>
    <property type="resolution" value="2.32 A"/>
    <property type="chains" value="A=1-402"/>
</dbReference>
<dbReference type="PDB" id="5NA4">
    <property type="method" value="X-ray"/>
    <property type="resolution" value="2.55 A"/>
    <property type="chains" value="A=1-402"/>
</dbReference>
<dbReference type="PDBsum" id="5NA1"/>
<dbReference type="PDBsum" id="5NA4"/>
<dbReference type="SMR" id="Q2FZV7"/>
<dbReference type="STRING" id="93061.SAOUHSC_00878"/>
<dbReference type="PaxDb" id="1280-SAXN108_0936"/>
<dbReference type="GeneID" id="3919225"/>
<dbReference type="KEGG" id="sao:SAOUHSC_00878"/>
<dbReference type="PATRIC" id="fig|93061.5.peg.798"/>
<dbReference type="eggNOG" id="COG1252">
    <property type="taxonomic scope" value="Bacteria"/>
</dbReference>
<dbReference type="HOGENOM" id="CLU_021377_7_2_9"/>
<dbReference type="OrthoDB" id="9781621at2"/>
<dbReference type="PRO" id="PR:Q2FZV7"/>
<dbReference type="Proteomes" id="UP000008816">
    <property type="component" value="Chromosome"/>
</dbReference>
<dbReference type="GO" id="GO:0005886">
    <property type="term" value="C:plasma membrane"/>
    <property type="evidence" value="ECO:0007669"/>
    <property type="project" value="UniProtKB-SubCell"/>
</dbReference>
<dbReference type="GO" id="GO:0003955">
    <property type="term" value="F:NAD(P)H dehydrogenase (quinone) activity"/>
    <property type="evidence" value="ECO:0000318"/>
    <property type="project" value="GO_Central"/>
</dbReference>
<dbReference type="GO" id="GO:0050136">
    <property type="term" value="F:NADH:ubiquinone reductase (non-electrogenic) activity"/>
    <property type="evidence" value="ECO:0007669"/>
    <property type="project" value="UniProtKB-EC"/>
</dbReference>
<dbReference type="GO" id="GO:0019646">
    <property type="term" value="P:aerobic electron transport chain"/>
    <property type="evidence" value="ECO:0000318"/>
    <property type="project" value="GO_Central"/>
</dbReference>
<dbReference type="FunFam" id="3.50.50.100:FF:000004">
    <property type="entry name" value="Pyridine nucleotide-disulfide oxidoreductase"/>
    <property type="match status" value="1"/>
</dbReference>
<dbReference type="Gene3D" id="3.50.50.100">
    <property type="match status" value="1"/>
</dbReference>
<dbReference type="InterPro" id="IPR036188">
    <property type="entry name" value="FAD/NAD-bd_sf"/>
</dbReference>
<dbReference type="InterPro" id="IPR023753">
    <property type="entry name" value="FAD/NAD-binding_dom"/>
</dbReference>
<dbReference type="InterPro" id="IPR051169">
    <property type="entry name" value="NADH-Q_oxidoreductase"/>
</dbReference>
<dbReference type="PANTHER" id="PTHR42913:SF3">
    <property type="entry name" value="64 KDA MITOCHONDRIAL NADH DEHYDROGENASE (EUROFUNG)"/>
    <property type="match status" value="1"/>
</dbReference>
<dbReference type="PANTHER" id="PTHR42913">
    <property type="entry name" value="APOPTOSIS-INDUCING FACTOR 1"/>
    <property type="match status" value="1"/>
</dbReference>
<dbReference type="Pfam" id="PF07992">
    <property type="entry name" value="Pyr_redox_2"/>
    <property type="match status" value="1"/>
</dbReference>
<dbReference type="PRINTS" id="PR00368">
    <property type="entry name" value="FADPNR"/>
</dbReference>
<dbReference type="SUPFAM" id="SSF51905">
    <property type="entry name" value="FAD/NAD(P)-binding domain"/>
    <property type="match status" value="2"/>
</dbReference>
<feature type="chain" id="PRO_0000287371" description="Type II NADH:quinone oxidoreductase">
    <location>
        <begin position="1"/>
        <end position="402"/>
    </location>
</feature>
<feature type="active site" evidence="9 10">
    <location>
        <position position="172"/>
    </location>
</feature>
<feature type="binding site" evidence="4">
    <location>
        <begin position="12"/>
        <end position="16"/>
    </location>
    <ligand>
        <name>FAD</name>
        <dbReference type="ChEBI" id="CHEBI:57692"/>
    </ligand>
</feature>
<feature type="binding site" evidence="4">
    <location>
        <begin position="39"/>
        <end position="40"/>
    </location>
    <ligand>
        <name>FAD</name>
        <dbReference type="ChEBI" id="CHEBI:57692"/>
    </ligand>
</feature>
<feature type="binding site" evidence="4">
    <location>
        <position position="83"/>
    </location>
    <ligand>
        <name>FAD</name>
        <dbReference type="ChEBI" id="CHEBI:57692"/>
    </ligand>
</feature>
<feature type="binding site" evidence="4">
    <location>
        <position position="302"/>
    </location>
    <ligand>
        <name>FAD</name>
        <dbReference type="ChEBI" id="CHEBI:57692"/>
    </ligand>
</feature>
<feature type="binding site" evidence="4">
    <location>
        <begin position="319"/>
        <end position="320"/>
    </location>
    <ligand>
        <name>FAD</name>
        <dbReference type="ChEBI" id="CHEBI:57692"/>
    </ligand>
</feature>
<feature type="binding site" evidence="4">
    <location>
        <position position="379"/>
    </location>
    <ligand>
        <name>FAD</name>
        <dbReference type="ChEBI" id="CHEBI:57692"/>
    </ligand>
</feature>
<feature type="mutagenesis site" description="3.4-fold decrease in kcat for DMN. Decreases the overall affinity for NAD(+) and the quinone." evidence="4">
    <original>E</original>
    <variation>A</variation>
    <location>
        <position position="172"/>
    </location>
</feature>
<feature type="mutagenesis site" description="Loss of activity." evidence="4">
    <original>E</original>
    <variation>D</variation>
    <location>
        <position position="172"/>
    </location>
</feature>
<feature type="mutagenesis site" description="12-fold decrease in kcat for DMN. Decreases the overall affinity for NAD(+) and the quinone." evidence="4">
    <original>E</original>
    <variation>Q</variation>
    <location>
        <position position="172"/>
    </location>
</feature>
<feature type="mutagenesis site" description="6-fold decrease in kcat for DMN. Decreases the overall affinity for NAD(+) and the quinone." evidence="4">
    <original>E</original>
    <variation>S</variation>
    <location>
        <position position="172"/>
    </location>
</feature>
<feature type="strand" evidence="13">
    <location>
        <begin position="6"/>
        <end position="11"/>
    </location>
</feature>
<feature type="helix" evidence="13">
    <location>
        <begin position="15"/>
        <end position="27"/>
    </location>
</feature>
<feature type="turn" evidence="13">
    <location>
        <begin position="30"/>
        <end position="32"/>
    </location>
</feature>
<feature type="strand" evidence="13">
    <location>
        <begin position="33"/>
        <end position="45"/>
    </location>
</feature>
<feature type="helix" evidence="13">
    <location>
        <begin position="47"/>
        <end position="49"/>
    </location>
</feature>
<feature type="helix" evidence="13">
    <location>
        <begin position="50"/>
        <end position="55"/>
    </location>
</feature>
<feature type="helix" evidence="13">
    <location>
        <begin position="60"/>
        <end position="63"/>
    </location>
</feature>
<feature type="strand" evidence="13">
    <location>
        <begin position="64"/>
        <end position="67"/>
    </location>
</feature>
<feature type="helix" evidence="13">
    <location>
        <begin position="68"/>
        <end position="70"/>
    </location>
</feature>
<feature type="turn" evidence="13">
    <location>
        <begin position="73"/>
        <end position="75"/>
    </location>
</feature>
<feature type="strand" evidence="13">
    <location>
        <begin position="76"/>
        <end position="80"/>
    </location>
</feature>
<feature type="strand" evidence="13">
    <location>
        <begin position="83"/>
        <end position="87"/>
    </location>
</feature>
<feature type="turn" evidence="13">
    <location>
        <begin position="88"/>
        <end position="91"/>
    </location>
</feature>
<feature type="strand" evidence="13">
    <location>
        <begin position="92"/>
        <end position="95"/>
    </location>
</feature>
<feature type="strand" evidence="13">
    <location>
        <begin position="98"/>
        <end position="101"/>
    </location>
</feature>
<feature type="strand" evidence="13">
    <location>
        <begin position="103"/>
        <end position="107"/>
    </location>
</feature>
<feature type="strand" evidence="13">
    <location>
        <begin position="111"/>
        <end position="113"/>
    </location>
</feature>
<feature type="helix" evidence="13">
    <location>
        <begin position="121"/>
        <end position="124"/>
    </location>
</feature>
<feature type="helix" evidence="13">
    <location>
        <begin position="131"/>
        <end position="150"/>
    </location>
</feature>
<feature type="helix" evidence="13">
    <location>
        <begin position="156"/>
        <end position="159"/>
    </location>
</feature>
<feature type="strand" evidence="13">
    <location>
        <begin position="160"/>
        <end position="164"/>
    </location>
</feature>
<feature type="helix" evidence="13">
    <location>
        <begin position="168"/>
        <end position="188"/>
    </location>
</feature>
<feature type="helix" evidence="13">
    <location>
        <begin position="192"/>
        <end position="194"/>
    </location>
</feature>
<feature type="strand" evidence="13">
    <location>
        <begin position="196"/>
        <end position="200"/>
    </location>
</feature>
<feature type="strand" evidence="13">
    <location>
        <begin position="202"/>
        <end position="207"/>
    </location>
</feature>
<feature type="helix" evidence="13">
    <location>
        <begin position="212"/>
        <end position="224"/>
    </location>
</feature>
<feature type="strand" evidence="13">
    <location>
        <begin position="227"/>
        <end position="230"/>
    </location>
</feature>
<feature type="strand" evidence="13">
    <location>
        <begin position="235"/>
        <end position="239"/>
    </location>
</feature>
<feature type="strand" evidence="13">
    <location>
        <begin position="242"/>
        <end position="247"/>
    </location>
</feature>
<feature type="strand" evidence="13">
    <location>
        <begin position="250"/>
        <end position="255"/>
    </location>
</feature>
<feature type="strand" evidence="13">
    <location>
        <begin position="257"/>
        <end position="261"/>
    </location>
</feature>
<feature type="strand" evidence="13">
    <location>
        <begin position="265"/>
        <end position="267"/>
    </location>
</feature>
<feature type="helix" evidence="13">
    <location>
        <begin position="270"/>
        <end position="274"/>
    </location>
</feature>
<feature type="strand" evidence="13">
    <location>
        <begin position="275"/>
        <end position="279"/>
    </location>
</feature>
<feature type="strand" evidence="13">
    <location>
        <begin position="282"/>
        <end position="284"/>
    </location>
</feature>
<feature type="strand" evidence="13">
    <location>
        <begin position="289"/>
        <end position="291"/>
    </location>
</feature>
<feature type="strand" evidence="13">
    <location>
        <begin position="294"/>
        <end position="299"/>
    </location>
</feature>
<feature type="helix" evidence="13">
    <location>
        <begin position="301"/>
        <end position="303"/>
    </location>
</feature>
<feature type="helix" evidence="13">
    <location>
        <begin position="319"/>
        <end position="337"/>
    </location>
</feature>
<feature type="strand" evidence="13">
    <location>
        <begin position="351"/>
        <end position="355"/>
    </location>
</feature>
<feature type="strand" evidence="14">
    <location>
        <begin position="357"/>
        <end position="359"/>
    </location>
</feature>
<feature type="strand" evidence="13">
    <location>
        <begin position="361"/>
        <end position="365"/>
    </location>
</feature>
<feature type="strand" evidence="13">
    <location>
        <begin position="368"/>
        <end position="371"/>
    </location>
</feature>
<feature type="helix" evidence="13">
    <location>
        <begin position="373"/>
        <end position="399"/>
    </location>
</feature>
<protein>
    <recommendedName>
        <fullName evidence="6">Type II NADH:quinone oxidoreductase</fullName>
        <ecNumber evidence="2 4 5">1.6.5.9</ecNumber>
    </recommendedName>
    <alternativeName>
        <fullName evidence="7">NDH-2</fullName>
    </alternativeName>
</protein>